<accession>Q57764</accession>
<reference key="1">
    <citation type="journal article" date="1996" name="Science">
        <title>Complete genome sequence of the methanogenic archaeon, Methanococcus jannaschii.</title>
        <authorList>
            <person name="Bult C.J."/>
            <person name="White O."/>
            <person name="Olsen G.J."/>
            <person name="Zhou L."/>
            <person name="Fleischmann R.D."/>
            <person name="Sutton G.G."/>
            <person name="Blake J.A."/>
            <person name="FitzGerald L.M."/>
            <person name="Clayton R.A."/>
            <person name="Gocayne J.D."/>
            <person name="Kerlavage A.R."/>
            <person name="Dougherty B.A."/>
            <person name="Tomb J.-F."/>
            <person name="Adams M.D."/>
            <person name="Reich C.I."/>
            <person name="Overbeek R."/>
            <person name="Kirkness E.F."/>
            <person name="Weinstock K.G."/>
            <person name="Merrick J.M."/>
            <person name="Glodek A."/>
            <person name="Scott J.L."/>
            <person name="Geoghagen N.S.M."/>
            <person name="Weidman J.F."/>
            <person name="Fuhrmann J.L."/>
            <person name="Nguyen D."/>
            <person name="Utterback T.R."/>
            <person name="Kelley J.M."/>
            <person name="Peterson J.D."/>
            <person name="Sadow P.W."/>
            <person name="Hanna M.C."/>
            <person name="Cotton M.D."/>
            <person name="Roberts K.M."/>
            <person name="Hurst M.A."/>
            <person name="Kaine B.P."/>
            <person name="Borodovsky M."/>
            <person name="Klenk H.-P."/>
            <person name="Fraser C.M."/>
            <person name="Smith H.O."/>
            <person name="Woese C.R."/>
            <person name="Venter J.C."/>
        </authorList>
    </citation>
    <scope>NUCLEOTIDE SEQUENCE [LARGE SCALE GENOMIC DNA]</scope>
    <source>
        <strain>ATCC 43067 / DSM 2661 / JAL-1 / JCM 10045 / NBRC 100440</strain>
    </source>
</reference>
<reference key="2">
    <citation type="journal article" date="2002" name="J. Biol. Chem.">
        <title>Methanococcus jannaschii uses a pyruvoyl-dependent arginine decarboxylase in polyamine biosynthesis.</title>
        <authorList>
            <person name="Graham D.E."/>
            <person name="Xu H."/>
            <person name="White R.H."/>
        </authorList>
    </citation>
    <scope>CHARACTERIZATION</scope>
    <scope>MASS SPECTROMETRY</scope>
    <scope>PYRUVATE FORMATION AT SER-53</scope>
    <source>
        <strain>ATCC 43067 / DSM 2661 / JAL-1 / JCM 10045 / NBRC 100440</strain>
    </source>
</reference>
<sequence length="165" mass="17708">MNAEINPLHAYFKLPNTVSLVAGSSEGETPLNAFDGALLNAGIGNVNLIRISSIMPPEAEIVPLPKLPMGALVPTAYGYIISDVPGETISAAISVAIPKDKSLCGLIMEYEGKCSKKEAEKTVREMAKIGFEMRGWELDRIESIAVEHTVEKLGCAFAAAALWYK</sequence>
<keyword id="KW-0002">3D-structure</keyword>
<keyword id="KW-0210">Decarboxylase</keyword>
<keyword id="KW-0456">Lyase</keyword>
<keyword id="KW-0670">Pyruvate</keyword>
<keyword id="KW-1185">Reference proteome</keyword>
<dbReference type="EC" id="4.1.1.19"/>
<dbReference type="EMBL" id="L77117">
    <property type="protein sequence ID" value="AAB98302.1"/>
    <property type="molecule type" value="Genomic_DNA"/>
</dbReference>
<dbReference type="PIR" id="E64339">
    <property type="entry name" value="E64339"/>
</dbReference>
<dbReference type="RefSeq" id="WP_010869814.1">
    <property type="nucleotide sequence ID" value="NC_000909.1"/>
</dbReference>
<dbReference type="PDB" id="1MT1">
    <property type="method" value="X-ray"/>
    <property type="resolution" value="2.20 A"/>
    <property type="chains" value="A/C/E/G/I/K=1-52, B/D/F/H/J/L=53-165"/>
</dbReference>
<dbReference type="PDB" id="1N13">
    <property type="method" value="X-ray"/>
    <property type="resolution" value="1.40 A"/>
    <property type="chains" value="A/C/E/G/I/K=1-52, B/D/F/H/J/L=53-165"/>
</dbReference>
<dbReference type="PDB" id="1N2M">
    <property type="method" value="X-ray"/>
    <property type="resolution" value="1.90 A"/>
    <property type="chains" value="A/B/C/D/E/F=1-165"/>
</dbReference>
<dbReference type="PDB" id="2QQC">
    <property type="method" value="X-ray"/>
    <property type="resolution" value="2.00 A"/>
    <property type="chains" value="A/C/E/G/I/K=1-52, B/D/F/H/J/L=54-165"/>
</dbReference>
<dbReference type="PDB" id="2QQD">
    <property type="method" value="X-ray"/>
    <property type="resolution" value="2.00 A"/>
    <property type="chains" value="A/D=1-52, B/E=54-165, C/F/G/H=1-165"/>
</dbReference>
<dbReference type="PDBsum" id="1MT1"/>
<dbReference type="PDBsum" id="1N13"/>
<dbReference type="PDBsum" id="1N2M"/>
<dbReference type="PDBsum" id="2QQC"/>
<dbReference type="PDBsum" id="2QQD"/>
<dbReference type="SMR" id="Q57764"/>
<dbReference type="STRING" id="243232.MJ_0316"/>
<dbReference type="PaxDb" id="243232-MJ_0316"/>
<dbReference type="EnsemblBacteria" id="AAB98302">
    <property type="protein sequence ID" value="AAB98302"/>
    <property type="gene ID" value="MJ_0316"/>
</dbReference>
<dbReference type="GeneID" id="1451171"/>
<dbReference type="KEGG" id="mja:MJ_0316"/>
<dbReference type="eggNOG" id="arCOG04490">
    <property type="taxonomic scope" value="Archaea"/>
</dbReference>
<dbReference type="HOGENOM" id="CLU_114389_2_0_2"/>
<dbReference type="InParanoid" id="Q57764"/>
<dbReference type="OrthoDB" id="30748at2157"/>
<dbReference type="PhylomeDB" id="Q57764"/>
<dbReference type="BRENDA" id="4.1.1.19">
    <property type="organism ID" value="3260"/>
</dbReference>
<dbReference type="SABIO-RK" id="Q57764"/>
<dbReference type="EvolutionaryTrace" id="Q57764"/>
<dbReference type="Proteomes" id="UP000000805">
    <property type="component" value="Chromosome"/>
</dbReference>
<dbReference type="GO" id="GO:0008792">
    <property type="term" value="F:arginine decarboxylase activity"/>
    <property type="evidence" value="ECO:0007669"/>
    <property type="project" value="UniProtKB-UniRule"/>
</dbReference>
<dbReference type="GO" id="GO:0006527">
    <property type="term" value="P:arginine catabolic process"/>
    <property type="evidence" value="ECO:0007669"/>
    <property type="project" value="InterPro"/>
</dbReference>
<dbReference type="Gene3D" id="3.30.60.30">
    <property type="match status" value="1"/>
</dbReference>
<dbReference type="Gene3D" id="3.50.20.10">
    <property type="entry name" value="Pyruvoyl-Dependent Histidine Decarboxylase, subunit B"/>
    <property type="match status" value="1"/>
</dbReference>
<dbReference type="HAMAP" id="MF_01404">
    <property type="entry name" value="PvlArgDC"/>
    <property type="match status" value="1"/>
</dbReference>
<dbReference type="InterPro" id="IPR016104">
    <property type="entry name" value="Pyr-dep_his/arg-deCO2ase"/>
</dbReference>
<dbReference type="InterPro" id="IPR016105">
    <property type="entry name" value="Pyr-dep_his/arg-deCO2ase_sand"/>
</dbReference>
<dbReference type="InterPro" id="IPR002724">
    <property type="entry name" value="Pyruvoyl-dep_arg_deCO2ase"/>
</dbReference>
<dbReference type="NCBIfam" id="TIGR00286">
    <property type="entry name" value="pyruvoyl-dependent arginine decarboxylase"/>
    <property type="match status" value="1"/>
</dbReference>
<dbReference type="PANTHER" id="PTHR40438">
    <property type="entry name" value="PYRUVOYL-DEPENDENT ARGININE DECARBOXYLASE"/>
    <property type="match status" value="1"/>
</dbReference>
<dbReference type="PANTHER" id="PTHR40438:SF1">
    <property type="entry name" value="PYRUVOYL-DEPENDENT ARGININE DECARBOXYLASE"/>
    <property type="match status" value="1"/>
</dbReference>
<dbReference type="Pfam" id="PF01862">
    <property type="entry name" value="PvlArgDC"/>
    <property type="match status" value="1"/>
</dbReference>
<dbReference type="PIRSF" id="PIRSF005216">
    <property type="entry name" value="Pyruvoyl-dep_arg_deCO2ase"/>
    <property type="match status" value="1"/>
</dbReference>
<dbReference type="SFLD" id="SFLDF00471">
    <property type="entry name" value="Pyruvoyl-dependent_arginine_de"/>
    <property type="match status" value="1"/>
</dbReference>
<dbReference type="SFLD" id="SFLDG01170">
    <property type="entry name" value="Pyruvoyl-dependent_arginine_de"/>
    <property type="match status" value="1"/>
</dbReference>
<dbReference type="SFLD" id="SFLDS00055">
    <property type="entry name" value="Pyruvoyl-Dependent_Histidine/A"/>
    <property type="match status" value="1"/>
</dbReference>
<dbReference type="SUPFAM" id="SSF56271">
    <property type="entry name" value="Pyruvoyl-dependent histidine and arginine decarboxylases"/>
    <property type="match status" value="1"/>
</dbReference>
<comment type="catalytic activity">
    <reaction>
        <text>L-arginine + H(+) = agmatine + CO2</text>
        <dbReference type="Rhea" id="RHEA:17641"/>
        <dbReference type="ChEBI" id="CHEBI:15378"/>
        <dbReference type="ChEBI" id="CHEBI:16526"/>
        <dbReference type="ChEBI" id="CHEBI:32682"/>
        <dbReference type="ChEBI" id="CHEBI:58145"/>
        <dbReference type="EC" id="4.1.1.19"/>
    </reaction>
</comment>
<comment type="cofactor">
    <cofactor>
        <name>pyruvate</name>
        <dbReference type="ChEBI" id="CHEBI:15361"/>
    </cofactor>
    <text>Binds 1 pyruvoyl group covalently per subunit.</text>
</comment>
<comment type="biophysicochemical properties">
    <temperatureDependence>
        <text>Thermostable.</text>
    </temperatureDependence>
</comment>
<comment type="subunit">
    <text>Trimer of an alpha-beta dimer.</text>
</comment>
<comment type="mass spectrometry" mass="5436.0" error="11.0" method="MALDI" evidence="1">
    <molecule>Pyruvoyl-dependent arginine decarboxylase subunit beta</molecule>
</comment>
<comment type="mass spectrometry" mass="12356.0" error="57.0" method="MALDI" evidence="1">
    <molecule>Pyruvoyl-dependent arginine decarboxylase subunit alpha</molecule>
</comment>
<comment type="similarity">
    <text evidence="2">Belongs to the PdaD family.</text>
</comment>
<feature type="chain" id="PRO_0000023314" description="Pyruvoyl-dependent arginine decarboxylase subunit beta">
    <location>
        <begin position="1"/>
        <end position="52"/>
    </location>
</feature>
<feature type="chain" id="PRO_0000023315" description="Pyruvoyl-dependent arginine decarboxylase subunit alpha">
    <location>
        <begin position="53"/>
        <end position="165"/>
    </location>
</feature>
<feature type="site" description="Cleavage (non-hydrolytic)">
    <location>
        <begin position="52"/>
        <end position="53"/>
    </location>
</feature>
<feature type="modified residue" description="Pyruvic acid (Ser)" evidence="1">
    <location>
        <position position="53"/>
    </location>
</feature>
<feature type="helix" evidence="4">
    <location>
        <begin position="10"/>
        <end position="12"/>
    </location>
</feature>
<feature type="strand" evidence="3">
    <location>
        <begin position="17"/>
        <end position="26"/>
    </location>
</feature>
<feature type="helix" evidence="3">
    <location>
        <begin position="30"/>
        <end position="41"/>
    </location>
</feature>
<feature type="strand" evidence="3">
    <location>
        <begin position="46"/>
        <end position="51"/>
    </location>
</feature>
<feature type="strand" evidence="4">
    <location>
        <begin position="53"/>
        <end position="55"/>
    </location>
</feature>
<feature type="strand" evidence="3">
    <location>
        <begin position="72"/>
        <end position="82"/>
    </location>
</feature>
<feature type="strand" evidence="3">
    <location>
        <begin position="88"/>
        <end position="100"/>
    </location>
</feature>
<feature type="strand" evidence="3">
    <location>
        <begin position="105"/>
        <end position="114"/>
    </location>
</feature>
<feature type="helix" evidence="3">
    <location>
        <begin position="116"/>
        <end position="134"/>
    </location>
</feature>
<feature type="strand" evidence="3">
    <location>
        <begin position="138"/>
        <end position="149"/>
    </location>
</feature>
<feature type="strand" evidence="3">
    <location>
        <begin position="151"/>
        <end position="163"/>
    </location>
</feature>
<name>PDAD_METJA</name>
<proteinExistence type="evidence at protein level"/>
<protein>
    <recommendedName>
        <fullName>Pyruvoyl-dependent arginine decarboxylase</fullName>
        <shortName>PvlArgDC</shortName>
        <ecNumber>4.1.1.19</ecNumber>
    </recommendedName>
    <component>
        <recommendedName>
            <fullName>Pyruvoyl-dependent arginine decarboxylase subunit beta</fullName>
        </recommendedName>
    </component>
    <component>
        <recommendedName>
            <fullName>Pyruvoyl-dependent arginine decarboxylase subunit alpha</fullName>
        </recommendedName>
    </component>
</protein>
<evidence type="ECO:0000269" key="1">
    <source>
    </source>
</evidence>
<evidence type="ECO:0000305" key="2"/>
<evidence type="ECO:0007829" key="3">
    <source>
        <dbReference type="PDB" id="1N13"/>
    </source>
</evidence>
<evidence type="ECO:0007829" key="4">
    <source>
        <dbReference type="PDB" id="2QQD"/>
    </source>
</evidence>
<organism>
    <name type="scientific">Methanocaldococcus jannaschii (strain ATCC 43067 / DSM 2661 / JAL-1 / JCM 10045 / NBRC 100440)</name>
    <name type="common">Methanococcus jannaschii</name>
    <dbReference type="NCBI Taxonomy" id="243232"/>
    <lineage>
        <taxon>Archaea</taxon>
        <taxon>Methanobacteriati</taxon>
        <taxon>Methanobacteriota</taxon>
        <taxon>Methanomada group</taxon>
        <taxon>Methanococci</taxon>
        <taxon>Methanococcales</taxon>
        <taxon>Methanocaldococcaceae</taxon>
        <taxon>Methanocaldococcus</taxon>
    </lineage>
</organism>
<gene>
    <name type="primary">pdaD</name>
    <name type="ordered locus">MJ0316</name>
</gene>